<dbReference type="EC" id="5.6.1.7" evidence="1"/>
<dbReference type="EMBL" id="CP001321">
    <property type="protein sequence ID" value="ACL33517.1"/>
    <property type="molecule type" value="Genomic_DNA"/>
</dbReference>
<dbReference type="RefSeq" id="WP_010787268.1">
    <property type="nucleotide sequence ID" value="NC_011852.1"/>
</dbReference>
<dbReference type="SMR" id="B8F865"/>
<dbReference type="STRING" id="557723.HAPS_2058"/>
<dbReference type="KEGG" id="hap:HAPS_2058"/>
<dbReference type="HOGENOM" id="CLU_016503_3_0_6"/>
<dbReference type="Proteomes" id="UP000006743">
    <property type="component" value="Chromosome"/>
</dbReference>
<dbReference type="GO" id="GO:0005737">
    <property type="term" value="C:cytoplasm"/>
    <property type="evidence" value="ECO:0007669"/>
    <property type="project" value="UniProtKB-SubCell"/>
</dbReference>
<dbReference type="GO" id="GO:0005524">
    <property type="term" value="F:ATP binding"/>
    <property type="evidence" value="ECO:0007669"/>
    <property type="project" value="UniProtKB-UniRule"/>
</dbReference>
<dbReference type="GO" id="GO:0140662">
    <property type="term" value="F:ATP-dependent protein folding chaperone"/>
    <property type="evidence" value="ECO:0007669"/>
    <property type="project" value="InterPro"/>
</dbReference>
<dbReference type="GO" id="GO:0016853">
    <property type="term" value="F:isomerase activity"/>
    <property type="evidence" value="ECO:0007669"/>
    <property type="project" value="UniProtKB-KW"/>
</dbReference>
<dbReference type="GO" id="GO:0051082">
    <property type="term" value="F:unfolded protein binding"/>
    <property type="evidence" value="ECO:0007669"/>
    <property type="project" value="UniProtKB-UniRule"/>
</dbReference>
<dbReference type="GO" id="GO:0042026">
    <property type="term" value="P:protein refolding"/>
    <property type="evidence" value="ECO:0007669"/>
    <property type="project" value="UniProtKB-UniRule"/>
</dbReference>
<dbReference type="CDD" id="cd03344">
    <property type="entry name" value="GroEL"/>
    <property type="match status" value="1"/>
</dbReference>
<dbReference type="FunFam" id="1.10.560.10:FF:000001">
    <property type="entry name" value="60 kDa chaperonin"/>
    <property type="match status" value="1"/>
</dbReference>
<dbReference type="FunFam" id="3.50.7.10:FF:000001">
    <property type="entry name" value="60 kDa chaperonin"/>
    <property type="match status" value="1"/>
</dbReference>
<dbReference type="Gene3D" id="3.50.7.10">
    <property type="entry name" value="GroEL"/>
    <property type="match status" value="1"/>
</dbReference>
<dbReference type="Gene3D" id="1.10.560.10">
    <property type="entry name" value="GroEL-like equatorial domain"/>
    <property type="match status" value="1"/>
</dbReference>
<dbReference type="Gene3D" id="3.30.260.10">
    <property type="entry name" value="TCP-1-like chaperonin intermediate domain"/>
    <property type="match status" value="1"/>
</dbReference>
<dbReference type="HAMAP" id="MF_00600">
    <property type="entry name" value="CH60"/>
    <property type="match status" value="1"/>
</dbReference>
<dbReference type="InterPro" id="IPR018370">
    <property type="entry name" value="Chaperonin_Cpn60_CS"/>
</dbReference>
<dbReference type="InterPro" id="IPR001844">
    <property type="entry name" value="Cpn60/GroEL"/>
</dbReference>
<dbReference type="InterPro" id="IPR002423">
    <property type="entry name" value="Cpn60/GroEL/TCP-1"/>
</dbReference>
<dbReference type="InterPro" id="IPR027409">
    <property type="entry name" value="GroEL-like_apical_dom_sf"/>
</dbReference>
<dbReference type="InterPro" id="IPR027413">
    <property type="entry name" value="GROEL-like_equatorial_sf"/>
</dbReference>
<dbReference type="InterPro" id="IPR027410">
    <property type="entry name" value="TCP-1-like_intermed_sf"/>
</dbReference>
<dbReference type="NCBIfam" id="TIGR02348">
    <property type="entry name" value="GroEL"/>
    <property type="match status" value="1"/>
</dbReference>
<dbReference type="NCBIfam" id="NF000592">
    <property type="entry name" value="PRK00013.1"/>
    <property type="match status" value="1"/>
</dbReference>
<dbReference type="NCBIfam" id="NF009487">
    <property type="entry name" value="PRK12849.1"/>
    <property type="match status" value="1"/>
</dbReference>
<dbReference type="NCBIfam" id="NF009488">
    <property type="entry name" value="PRK12850.1"/>
    <property type="match status" value="1"/>
</dbReference>
<dbReference type="NCBIfam" id="NF009489">
    <property type="entry name" value="PRK12851.1"/>
    <property type="match status" value="1"/>
</dbReference>
<dbReference type="PANTHER" id="PTHR45633">
    <property type="entry name" value="60 KDA HEAT SHOCK PROTEIN, MITOCHONDRIAL"/>
    <property type="match status" value="1"/>
</dbReference>
<dbReference type="Pfam" id="PF00118">
    <property type="entry name" value="Cpn60_TCP1"/>
    <property type="match status" value="1"/>
</dbReference>
<dbReference type="PRINTS" id="PR00298">
    <property type="entry name" value="CHAPERONIN60"/>
</dbReference>
<dbReference type="SUPFAM" id="SSF52029">
    <property type="entry name" value="GroEL apical domain-like"/>
    <property type="match status" value="1"/>
</dbReference>
<dbReference type="SUPFAM" id="SSF48592">
    <property type="entry name" value="GroEL equatorial domain-like"/>
    <property type="match status" value="1"/>
</dbReference>
<dbReference type="SUPFAM" id="SSF54849">
    <property type="entry name" value="GroEL-intermediate domain like"/>
    <property type="match status" value="1"/>
</dbReference>
<dbReference type="PROSITE" id="PS00296">
    <property type="entry name" value="CHAPERONINS_CPN60"/>
    <property type="match status" value="1"/>
</dbReference>
<reference key="1">
    <citation type="journal article" date="2009" name="J. Bacteriol.">
        <title>Complete genome sequence of Haemophilus parasuis SH0165.</title>
        <authorList>
            <person name="Yue M."/>
            <person name="Yang F."/>
            <person name="Yang J."/>
            <person name="Bei W."/>
            <person name="Cai X."/>
            <person name="Chen L."/>
            <person name="Dong J."/>
            <person name="Zhou R."/>
            <person name="Jin M."/>
            <person name="Jin Q."/>
            <person name="Chen H."/>
        </authorList>
    </citation>
    <scope>NUCLEOTIDE SEQUENCE [LARGE SCALE GENOMIC DNA]</scope>
    <source>
        <strain>SH0165</strain>
    </source>
</reference>
<proteinExistence type="inferred from homology"/>
<accession>B8F865</accession>
<name>CH60_GLAP5</name>
<comment type="function">
    <text evidence="1">Together with its co-chaperonin GroES, plays an essential role in assisting protein folding. The GroEL-GroES system forms a nano-cage that allows encapsulation of the non-native substrate proteins and provides a physical environment optimized to promote and accelerate protein folding.</text>
</comment>
<comment type="catalytic activity">
    <reaction evidence="1">
        <text>ATP + H2O + a folded polypeptide = ADP + phosphate + an unfolded polypeptide.</text>
        <dbReference type="EC" id="5.6.1.7"/>
    </reaction>
</comment>
<comment type="subunit">
    <text evidence="1">Forms a cylinder of 14 subunits composed of two heptameric rings stacked back-to-back. Interacts with the co-chaperonin GroES.</text>
</comment>
<comment type="subcellular location">
    <subcellularLocation>
        <location evidence="1">Cytoplasm</location>
    </subcellularLocation>
</comment>
<comment type="similarity">
    <text evidence="1">Belongs to the chaperonin (HSP60) family.</text>
</comment>
<feature type="chain" id="PRO_1000147035" description="Chaperonin GroEL">
    <location>
        <begin position="1"/>
        <end position="547"/>
    </location>
</feature>
<feature type="binding site" evidence="1">
    <location>
        <begin position="30"/>
        <end position="33"/>
    </location>
    <ligand>
        <name>ATP</name>
        <dbReference type="ChEBI" id="CHEBI:30616"/>
    </ligand>
</feature>
<feature type="binding site" evidence="1">
    <location>
        <position position="51"/>
    </location>
    <ligand>
        <name>ATP</name>
        <dbReference type="ChEBI" id="CHEBI:30616"/>
    </ligand>
</feature>
<feature type="binding site" evidence="1">
    <location>
        <begin position="87"/>
        <end position="91"/>
    </location>
    <ligand>
        <name>ATP</name>
        <dbReference type="ChEBI" id="CHEBI:30616"/>
    </ligand>
</feature>
<feature type="binding site" evidence="1">
    <location>
        <position position="415"/>
    </location>
    <ligand>
        <name>ATP</name>
        <dbReference type="ChEBI" id="CHEBI:30616"/>
    </ligand>
</feature>
<feature type="binding site" evidence="1">
    <location>
        <begin position="480"/>
        <end position="482"/>
    </location>
    <ligand>
        <name>ATP</name>
        <dbReference type="ChEBI" id="CHEBI:30616"/>
    </ligand>
</feature>
<feature type="binding site" evidence="1">
    <location>
        <position position="496"/>
    </location>
    <ligand>
        <name>ATP</name>
        <dbReference type="ChEBI" id="CHEBI:30616"/>
    </ligand>
</feature>
<sequence>MAAKDVKFGNDARVKMLKGVNVLADAVKVTLGPKGRNVVLDKAFGAPTITKDGVSVAREIELEDKFENMGAQMVKEVASKANDAAGDGTTTATVLAQAIVNEGLKAVAAGMNPMDLKRGIDKAVAAVVEELKSLSKPCETSKEIEQVGTISANSDSTVGKLIAQAMEKVGKEGVITVEDGTGLEDALDVVEGMQFDRGYLSPYFINKPEAGTVELENPYILLVDKKISNIREILPVLEAVAKAGKPLLIIAEDIEGEALATLVVNTMRGIVKVAAVKAPGFGDRRKAMLQDIAILTAGTVISEEIGMELEKATIEELGQAKRVVISKDNTTIIDGVGDEVQIKARVAQIRQQIEDSTSDYDKEKLQERVAKLAGGVAVIKVGAATEVEMKEKKDRVDDALHATRAAVEEGIIAGGGVALVRAASKVADVVKGDNEEQNVGIRLALRAMEAPLRQIVTNAGEEASVVARNVKDGNGNYGYNAATEQYGDMLEMGILDPTKVTRSALQFAASIAGLMITTECMVTDLPKEEKADLGAGMGGMGGMGGMM</sequence>
<gene>
    <name evidence="1" type="primary">groEL</name>
    <name evidence="1" type="synonym">groL</name>
    <name type="ordered locus">HAPS_2058</name>
</gene>
<evidence type="ECO:0000255" key="1">
    <source>
        <dbReference type="HAMAP-Rule" id="MF_00600"/>
    </source>
</evidence>
<keyword id="KW-0067">ATP-binding</keyword>
<keyword id="KW-0143">Chaperone</keyword>
<keyword id="KW-0963">Cytoplasm</keyword>
<keyword id="KW-0413">Isomerase</keyword>
<keyword id="KW-0547">Nucleotide-binding</keyword>
<keyword id="KW-1185">Reference proteome</keyword>
<protein>
    <recommendedName>
        <fullName evidence="1">Chaperonin GroEL</fullName>
        <ecNumber evidence="1">5.6.1.7</ecNumber>
    </recommendedName>
    <alternativeName>
        <fullName evidence="1">60 kDa chaperonin</fullName>
    </alternativeName>
    <alternativeName>
        <fullName evidence="1">Chaperonin-60</fullName>
        <shortName evidence="1">Cpn60</shortName>
    </alternativeName>
</protein>
<organism>
    <name type="scientific">Glaesserella parasuis serovar 5 (strain SH0165)</name>
    <name type="common">Haemophilus parasuis</name>
    <dbReference type="NCBI Taxonomy" id="557723"/>
    <lineage>
        <taxon>Bacteria</taxon>
        <taxon>Pseudomonadati</taxon>
        <taxon>Pseudomonadota</taxon>
        <taxon>Gammaproteobacteria</taxon>
        <taxon>Pasteurellales</taxon>
        <taxon>Pasteurellaceae</taxon>
        <taxon>Glaesserella</taxon>
    </lineage>
</organism>